<dbReference type="EC" id="4.2.1.33" evidence="1"/>
<dbReference type="EMBL" id="CP000036">
    <property type="protein sequence ID" value="ABB64794.1"/>
    <property type="molecule type" value="Genomic_DNA"/>
</dbReference>
<dbReference type="RefSeq" id="WP_000818228.1">
    <property type="nucleotide sequence ID" value="NC_007613.1"/>
</dbReference>
<dbReference type="SMR" id="Q326G4"/>
<dbReference type="GeneID" id="93777364"/>
<dbReference type="KEGG" id="sbo:SBO_0058"/>
<dbReference type="HOGENOM" id="CLU_081378_0_3_6"/>
<dbReference type="UniPathway" id="UPA00048">
    <property type="reaction ID" value="UER00071"/>
</dbReference>
<dbReference type="Proteomes" id="UP000007067">
    <property type="component" value="Chromosome"/>
</dbReference>
<dbReference type="GO" id="GO:0009316">
    <property type="term" value="C:3-isopropylmalate dehydratase complex"/>
    <property type="evidence" value="ECO:0007669"/>
    <property type="project" value="InterPro"/>
</dbReference>
<dbReference type="GO" id="GO:0003861">
    <property type="term" value="F:3-isopropylmalate dehydratase activity"/>
    <property type="evidence" value="ECO:0007669"/>
    <property type="project" value="UniProtKB-UniRule"/>
</dbReference>
<dbReference type="GO" id="GO:0009098">
    <property type="term" value="P:L-leucine biosynthetic process"/>
    <property type="evidence" value="ECO:0007669"/>
    <property type="project" value="UniProtKB-UniRule"/>
</dbReference>
<dbReference type="CDD" id="cd01577">
    <property type="entry name" value="IPMI_Swivel"/>
    <property type="match status" value="1"/>
</dbReference>
<dbReference type="FunFam" id="3.20.19.10:FF:000003">
    <property type="entry name" value="3-isopropylmalate dehydratase small subunit"/>
    <property type="match status" value="1"/>
</dbReference>
<dbReference type="Gene3D" id="3.20.19.10">
    <property type="entry name" value="Aconitase, domain 4"/>
    <property type="match status" value="1"/>
</dbReference>
<dbReference type="HAMAP" id="MF_01031">
    <property type="entry name" value="LeuD_type1"/>
    <property type="match status" value="1"/>
</dbReference>
<dbReference type="InterPro" id="IPR004431">
    <property type="entry name" value="3-IsopropMal_deHydase_ssu"/>
</dbReference>
<dbReference type="InterPro" id="IPR015928">
    <property type="entry name" value="Aconitase/3IPM_dehydase_swvl"/>
</dbReference>
<dbReference type="InterPro" id="IPR000573">
    <property type="entry name" value="AconitaseA/IPMdHydase_ssu_swvl"/>
</dbReference>
<dbReference type="InterPro" id="IPR033940">
    <property type="entry name" value="IPMI_Swivel"/>
</dbReference>
<dbReference type="InterPro" id="IPR050075">
    <property type="entry name" value="LeuD"/>
</dbReference>
<dbReference type="NCBIfam" id="TIGR00171">
    <property type="entry name" value="leuD"/>
    <property type="match status" value="1"/>
</dbReference>
<dbReference type="NCBIfam" id="NF002458">
    <property type="entry name" value="PRK01641.1"/>
    <property type="match status" value="1"/>
</dbReference>
<dbReference type="PANTHER" id="PTHR43345:SF5">
    <property type="entry name" value="3-ISOPROPYLMALATE DEHYDRATASE SMALL SUBUNIT"/>
    <property type="match status" value="1"/>
</dbReference>
<dbReference type="PANTHER" id="PTHR43345">
    <property type="entry name" value="3-ISOPROPYLMALATE DEHYDRATASE SMALL SUBUNIT 2-RELATED-RELATED"/>
    <property type="match status" value="1"/>
</dbReference>
<dbReference type="Pfam" id="PF00694">
    <property type="entry name" value="Aconitase_C"/>
    <property type="match status" value="1"/>
</dbReference>
<dbReference type="SUPFAM" id="SSF52016">
    <property type="entry name" value="LeuD/IlvD-like"/>
    <property type="match status" value="1"/>
</dbReference>
<reference key="1">
    <citation type="journal article" date="2005" name="Nucleic Acids Res.">
        <title>Genome dynamics and diversity of Shigella species, the etiologic agents of bacillary dysentery.</title>
        <authorList>
            <person name="Yang F."/>
            <person name="Yang J."/>
            <person name="Zhang X."/>
            <person name="Chen L."/>
            <person name="Jiang Y."/>
            <person name="Yan Y."/>
            <person name="Tang X."/>
            <person name="Wang J."/>
            <person name="Xiong Z."/>
            <person name="Dong J."/>
            <person name="Xue Y."/>
            <person name="Zhu Y."/>
            <person name="Xu X."/>
            <person name="Sun L."/>
            <person name="Chen S."/>
            <person name="Nie H."/>
            <person name="Peng J."/>
            <person name="Xu J."/>
            <person name="Wang Y."/>
            <person name="Yuan Z."/>
            <person name="Wen Y."/>
            <person name="Yao Z."/>
            <person name="Shen Y."/>
            <person name="Qiang B."/>
            <person name="Hou Y."/>
            <person name="Yu J."/>
            <person name="Jin Q."/>
        </authorList>
    </citation>
    <scope>NUCLEOTIDE SEQUENCE [LARGE SCALE GENOMIC DNA]</scope>
    <source>
        <strain>Sb227</strain>
    </source>
</reference>
<proteinExistence type="inferred from homology"/>
<accession>Q326G4</accession>
<comment type="function">
    <text evidence="1">Catalyzes the isomerization between 2-isopropylmalate and 3-isopropylmalate, via the formation of 2-isopropylmaleate.</text>
</comment>
<comment type="catalytic activity">
    <reaction evidence="1">
        <text>(2R,3S)-3-isopropylmalate = (2S)-2-isopropylmalate</text>
        <dbReference type="Rhea" id="RHEA:32287"/>
        <dbReference type="ChEBI" id="CHEBI:1178"/>
        <dbReference type="ChEBI" id="CHEBI:35121"/>
        <dbReference type="EC" id="4.2.1.33"/>
    </reaction>
</comment>
<comment type="pathway">
    <text evidence="1">Amino-acid biosynthesis; L-leucine biosynthesis; L-leucine from 3-methyl-2-oxobutanoate: step 2/4.</text>
</comment>
<comment type="subunit">
    <text evidence="1">Heterodimer of LeuC and LeuD.</text>
</comment>
<comment type="similarity">
    <text evidence="1">Belongs to the LeuD family. LeuD type 1 subfamily.</text>
</comment>
<name>LEUD_SHIBS</name>
<evidence type="ECO:0000255" key="1">
    <source>
        <dbReference type="HAMAP-Rule" id="MF_01031"/>
    </source>
</evidence>
<keyword id="KW-0028">Amino-acid biosynthesis</keyword>
<keyword id="KW-0100">Branched-chain amino acid biosynthesis</keyword>
<keyword id="KW-0432">Leucine biosynthesis</keyword>
<keyword id="KW-0456">Lyase</keyword>
<feature type="chain" id="PRO_0000141878" description="3-isopropylmalate dehydratase small subunit">
    <location>
        <begin position="1"/>
        <end position="201"/>
    </location>
</feature>
<sequence length="201" mass="22487">MAEKFIKHTGLVVPLDAANVDTDAIIPKQFLQKVTRTGFGAHLFNDWRFLDEKGQQPNPDFVLNFPQYQGASILLARENFGCGSSREHAPWALTDYGFKVVIAPSFADIFYGNSFNNQLLPVKLSDAEVDELFALVKANPGIHFDVDLEAQEVKAGEKTYRFTIDAFRRHCMMNGLDSIGLTLQHDDAIAAYEAKQPAFMN</sequence>
<organism>
    <name type="scientific">Shigella boydii serotype 4 (strain Sb227)</name>
    <dbReference type="NCBI Taxonomy" id="300268"/>
    <lineage>
        <taxon>Bacteria</taxon>
        <taxon>Pseudomonadati</taxon>
        <taxon>Pseudomonadota</taxon>
        <taxon>Gammaproteobacteria</taxon>
        <taxon>Enterobacterales</taxon>
        <taxon>Enterobacteriaceae</taxon>
        <taxon>Shigella</taxon>
    </lineage>
</organism>
<protein>
    <recommendedName>
        <fullName evidence="1">3-isopropylmalate dehydratase small subunit</fullName>
        <ecNumber evidence="1">4.2.1.33</ecNumber>
    </recommendedName>
    <alternativeName>
        <fullName evidence="1">Alpha-IPM isomerase</fullName>
        <shortName evidence="1">IPMI</shortName>
    </alternativeName>
    <alternativeName>
        <fullName evidence="1">Isopropylmalate isomerase</fullName>
    </alternativeName>
</protein>
<gene>
    <name evidence="1" type="primary">leuD</name>
    <name type="ordered locus">SBO_0058</name>
</gene>